<comment type="function">
    <text evidence="1">Transaldolase is important for the balance of metabolites in the pentose-phosphate pathway.</text>
</comment>
<comment type="catalytic activity">
    <reaction evidence="1">
        <text>D-sedoheptulose 7-phosphate + D-glyceraldehyde 3-phosphate = D-erythrose 4-phosphate + beta-D-fructose 6-phosphate</text>
        <dbReference type="Rhea" id="RHEA:17053"/>
        <dbReference type="ChEBI" id="CHEBI:16897"/>
        <dbReference type="ChEBI" id="CHEBI:57483"/>
        <dbReference type="ChEBI" id="CHEBI:57634"/>
        <dbReference type="ChEBI" id="CHEBI:59776"/>
        <dbReference type="EC" id="2.2.1.2"/>
    </reaction>
</comment>
<comment type="pathway">
    <text evidence="1">Carbohydrate degradation; pentose phosphate pathway; D-glyceraldehyde 3-phosphate and beta-D-fructose 6-phosphate from D-ribose 5-phosphate and D-xylulose 5-phosphate (non-oxidative stage): step 2/3.</text>
</comment>
<comment type="subcellular location">
    <subcellularLocation>
        <location evidence="1">Cytoplasm</location>
    </subcellularLocation>
</comment>
<comment type="similarity">
    <text evidence="1">Belongs to the transaldolase family. Type 3B subfamily.</text>
</comment>
<dbReference type="EC" id="2.2.1.2" evidence="1"/>
<dbReference type="EMBL" id="CP000246">
    <property type="protein sequence ID" value="ABG82298.1"/>
    <property type="molecule type" value="Genomic_DNA"/>
</dbReference>
<dbReference type="RefSeq" id="WP_011590306.1">
    <property type="nucleotide sequence ID" value="NC_008261.1"/>
</dbReference>
<dbReference type="SMR" id="Q0TTA4"/>
<dbReference type="STRING" id="195103.CPF_0684"/>
<dbReference type="PaxDb" id="195103-CPF_0684"/>
<dbReference type="KEGG" id="cpf:CPF_0684"/>
<dbReference type="eggNOG" id="COG0176">
    <property type="taxonomic scope" value="Bacteria"/>
</dbReference>
<dbReference type="HOGENOM" id="CLU_079764_0_0_9"/>
<dbReference type="UniPathway" id="UPA00115">
    <property type="reaction ID" value="UER00414"/>
</dbReference>
<dbReference type="Proteomes" id="UP000001823">
    <property type="component" value="Chromosome"/>
</dbReference>
<dbReference type="GO" id="GO:0005737">
    <property type="term" value="C:cytoplasm"/>
    <property type="evidence" value="ECO:0007669"/>
    <property type="project" value="UniProtKB-SubCell"/>
</dbReference>
<dbReference type="GO" id="GO:0016832">
    <property type="term" value="F:aldehyde-lyase activity"/>
    <property type="evidence" value="ECO:0007669"/>
    <property type="project" value="InterPro"/>
</dbReference>
<dbReference type="GO" id="GO:0004801">
    <property type="term" value="F:transaldolase activity"/>
    <property type="evidence" value="ECO:0007669"/>
    <property type="project" value="UniProtKB-UniRule"/>
</dbReference>
<dbReference type="GO" id="GO:0005975">
    <property type="term" value="P:carbohydrate metabolic process"/>
    <property type="evidence" value="ECO:0007669"/>
    <property type="project" value="InterPro"/>
</dbReference>
<dbReference type="GO" id="GO:0006098">
    <property type="term" value="P:pentose-phosphate shunt"/>
    <property type="evidence" value="ECO:0007669"/>
    <property type="project" value="UniProtKB-UniRule"/>
</dbReference>
<dbReference type="CDD" id="cd00956">
    <property type="entry name" value="Transaldolase_FSA"/>
    <property type="match status" value="1"/>
</dbReference>
<dbReference type="FunFam" id="3.20.20.70:FF:000018">
    <property type="entry name" value="Probable transaldolase"/>
    <property type="match status" value="1"/>
</dbReference>
<dbReference type="Gene3D" id="3.20.20.70">
    <property type="entry name" value="Aldolase class I"/>
    <property type="match status" value="1"/>
</dbReference>
<dbReference type="HAMAP" id="MF_00494">
    <property type="entry name" value="Transaldolase_3b"/>
    <property type="match status" value="1"/>
</dbReference>
<dbReference type="InterPro" id="IPR013785">
    <property type="entry name" value="Aldolase_TIM"/>
</dbReference>
<dbReference type="InterPro" id="IPR001585">
    <property type="entry name" value="TAL/FSA"/>
</dbReference>
<dbReference type="InterPro" id="IPR022999">
    <property type="entry name" value="Transaldolase_3B"/>
</dbReference>
<dbReference type="InterPro" id="IPR004731">
    <property type="entry name" value="Transaldolase_3B/F6P_aldolase"/>
</dbReference>
<dbReference type="InterPro" id="IPR018225">
    <property type="entry name" value="Transaldolase_AS"/>
</dbReference>
<dbReference type="InterPro" id="IPR033919">
    <property type="entry name" value="TSA/FSA_arc/bac"/>
</dbReference>
<dbReference type="NCBIfam" id="TIGR00875">
    <property type="entry name" value="fsa_talC_mipB"/>
    <property type="match status" value="1"/>
</dbReference>
<dbReference type="PANTHER" id="PTHR10683">
    <property type="entry name" value="TRANSALDOLASE"/>
    <property type="match status" value="1"/>
</dbReference>
<dbReference type="PANTHER" id="PTHR10683:SF36">
    <property type="entry name" value="TRANSALDOLASE"/>
    <property type="match status" value="1"/>
</dbReference>
<dbReference type="Pfam" id="PF00923">
    <property type="entry name" value="TAL_FSA"/>
    <property type="match status" value="1"/>
</dbReference>
<dbReference type="SUPFAM" id="SSF51569">
    <property type="entry name" value="Aldolase"/>
    <property type="match status" value="1"/>
</dbReference>
<dbReference type="PROSITE" id="PS01054">
    <property type="entry name" value="TRANSALDOLASE_1"/>
    <property type="match status" value="1"/>
</dbReference>
<dbReference type="PROSITE" id="PS00958">
    <property type="entry name" value="TRANSALDOLASE_2"/>
    <property type="match status" value="1"/>
</dbReference>
<sequence>MKIFIDTANVEEIRKASKLGVLAGVTTNPSLIAKEGRDIKEVIEEICSIVDGSISAEVMALECDEMVREGRELAKIHKNIVIKIPMCEEGLKAVKVLASEGIRTNVTLIFSPLQALLAARAGASFVSPFLGRLDDIGNPGIEIVTQIAEMFALHGIDTEIISASVRNPMHVLDSAMAGSHIATIPYNVILQMVKHPLTDAGMKKFIEDYNKAFNK</sequence>
<protein>
    <recommendedName>
        <fullName evidence="1">Probable transaldolase</fullName>
        <ecNumber evidence="1">2.2.1.2</ecNumber>
    </recommendedName>
</protein>
<keyword id="KW-0963">Cytoplasm</keyword>
<keyword id="KW-0570">Pentose shunt</keyword>
<keyword id="KW-0704">Schiff base</keyword>
<keyword id="KW-0808">Transferase</keyword>
<accession>Q0TTA4</accession>
<organism>
    <name type="scientific">Clostridium perfringens (strain ATCC 13124 / DSM 756 / JCM 1290 / NCIMB 6125 / NCTC 8237 / Type A)</name>
    <dbReference type="NCBI Taxonomy" id="195103"/>
    <lineage>
        <taxon>Bacteria</taxon>
        <taxon>Bacillati</taxon>
        <taxon>Bacillota</taxon>
        <taxon>Clostridia</taxon>
        <taxon>Eubacteriales</taxon>
        <taxon>Clostridiaceae</taxon>
        <taxon>Clostridium</taxon>
    </lineage>
</organism>
<gene>
    <name evidence="1" type="primary">tal</name>
    <name type="ordered locus">CPF_0684</name>
</gene>
<proteinExistence type="inferred from homology"/>
<name>TAL_CLOP1</name>
<feature type="chain" id="PRO_1000126300" description="Probable transaldolase">
    <location>
        <begin position="1"/>
        <end position="215"/>
    </location>
</feature>
<feature type="active site" description="Schiff-base intermediate with substrate" evidence="1">
    <location>
        <position position="83"/>
    </location>
</feature>
<reference key="1">
    <citation type="journal article" date="2006" name="Genome Res.">
        <title>Skewed genomic variability in strains of the toxigenic bacterial pathogen, Clostridium perfringens.</title>
        <authorList>
            <person name="Myers G.S.A."/>
            <person name="Rasko D.A."/>
            <person name="Cheung J.K."/>
            <person name="Ravel J."/>
            <person name="Seshadri R."/>
            <person name="DeBoy R.T."/>
            <person name="Ren Q."/>
            <person name="Varga J."/>
            <person name="Awad M.M."/>
            <person name="Brinkac L.M."/>
            <person name="Daugherty S.C."/>
            <person name="Haft D.H."/>
            <person name="Dodson R.J."/>
            <person name="Madupu R."/>
            <person name="Nelson W.C."/>
            <person name="Rosovitz M.J."/>
            <person name="Sullivan S.A."/>
            <person name="Khouri H."/>
            <person name="Dimitrov G.I."/>
            <person name="Watkins K.L."/>
            <person name="Mulligan S."/>
            <person name="Benton J."/>
            <person name="Radune D."/>
            <person name="Fisher D.J."/>
            <person name="Atkins H.S."/>
            <person name="Hiscox T."/>
            <person name="Jost B.H."/>
            <person name="Billington S.J."/>
            <person name="Songer J.G."/>
            <person name="McClane B.A."/>
            <person name="Titball R.W."/>
            <person name="Rood J.I."/>
            <person name="Melville S.B."/>
            <person name="Paulsen I.T."/>
        </authorList>
    </citation>
    <scope>NUCLEOTIDE SEQUENCE [LARGE SCALE GENOMIC DNA]</scope>
    <source>
        <strain>ATCC 13124 / DSM 756 / JCM 1290 / NCIMB 6125 / NCTC 8237 / S 107 / Type A</strain>
    </source>
</reference>
<evidence type="ECO:0000255" key="1">
    <source>
        <dbReference type="HAMAP-Rule" id="MF_00494"/>
    </source>
</evidence>